<reference key="1">
    <citation type="submission" date="1999-01" db="EMBL/GenBank/DDBJ databases">
        <authorList>
            <person name="Um H.W."/>
            <person name="Kang H.S."/>
        </authorList>
    </citation>
    <scope>NUCLEOTIDE SEQUENCE [GENOMIC DNA]</scope>
    <source>
        <strain>ATCC 31821 / ZM4 / CP4</strain>
    </source>
</reference>
<reference key="2">
    <citation type="journal article" date="2005" name="Nat. Biotechnol.">
        <title>The genome sequence of the ethanologenic bacterium Zymomonas mobilis ZM4.</title>
        <authorList>
            <person name="Seo J.-S."/>
            <person name="Chong H."/>
            <person name="Park H.S."/>
            <person name="Yoon K.-O."/>
            <person name="Jung C."/>
            <person name="Kim J.J."/>
            <person name="Hong J.H."/>
            <person name="Kim H."/>
            <person name="Kim J.-H."/>
            <person name="Kil J.-I."/>
            <person name="Park C.J."/>
            <person name="Oh H.-M."/>
            <person name="Lee J.-S."/>
            <person name="Jin S.-J."/>
            <person name="Um H.-W."/>
            <person name="Lee H.-J."/>
            <person name="Oh S.-J."/>
            <person name="Kim J.Y."/>
            <person name="Kang H.L."/>
            <person name="Lee S.Y."/>
            <person name="Lee K.J."/>
            <person name="Kang H.S."/>
        </authorList>
    </citation>
    <scope>NUCLEOTIDE SEQUENCE [LARGE SCALE GENOMIC DNA]</scope>
    <source>
        <strain>ATCC 31821 / ZM4 / CP4</strain>
    </source>
</reference>
<sequence>MSKRHSSKYKIDRRMGENIWGRPKSPVNRREYGPGQHGQRRRSKISDYGLQLKAKQKLKGYYGDVTEKQFRRSYDDASKLKGDTSQNLIGILERRLDMIVYRAKFAPTIFAARQLVSHGHIRVNGVKCNIASRRVNPGDEISLGSKAQEMALVLEAQSLAERDIPDYVLPDGNTKVTFVRIPTLDEVPYPVKMEPNLVVEFYSR</sequence>
<comment type="function">
    <text evidence="1">One of the primary rRNA binding proteins, it binds directly to 16S rRNA where it nucleates assembly of the body of the 30S subunit.</text>
</comment>
<comment type="function">
    <text evidence="1">With S5 and S12 plays an important role in translational accuracy.</text>
</comment>
<comment type="subunit">
    <text evidence="1">Part of the 30S ribosomal subunit. Contacts protein S5. The interaction surface between S4 and S5 is involved in control of translational fidelity.</text>
</comment>
<comment type="similarity">
    <text evidence="1">Belongs to the universal ribosomal protein uS4 family.</text>
</comment>
<gene>
    <name evidence="1" type="primary">rpsD</name>
    <name type="ordered locus">ZMO1366</name>
</gene>
<feature type="chain" id="PRO_0000132502" description="Small ribosomal subunit protein uS4">
    <location>
        <begin position="1"/>
        <end position="204"/>
    </location>
</feature>
<feature type="domain" description="S4 RNA-binding" evidence="1">
    <location>
        <begin position="94"/>
        <end position="157"/>
    </location>
</feature>
<feature type="region of interest" description="Disordered" evidence="2">
    <location>
        <begin position="1"/>
        <end position="46"/>
    </location>
</feature>
<proteinExistence type="inferred from homology"/>
<organism>
    <name type="scientific">Zymomonas mobilis subsp. mobilis (strain ATCC 31821 / ZM4 / CP4)</name>
    <dbReference type="NCBI Taxonomy" id="264203"/>
    <lineage>
        <taxon>Bacteria</taxon>
        <taxon>Pseudomonadati</taxon>
        <taxon>Pseudomonadota</taxon>
        <taxon>Alphaproteobacteria</taxon>
        <taxon>Sphingomonadales</taxon>
        <taxon>Zymomonadaceae</taxon>
        <taxon>Zymomonas</taxon>
    </lineage>
</organism>
<accession>Q9Z5U7</accession>
<accession>Q5NMS0</accession>
<evidence type="ECO:0000255" key="1">
    <source>
        <dbReference type="HAMAP-Rule" id="MF_01306"/>
    </source>
</evidence>
<evidence type="ECO:0000256" key="2">
    <source>
        <dbReference type="SAM" id="MobiDB-lite"/>
    </source>
</evidence>
<evidence type="ECO:0000305" key="3"/>
<dbReference type="EMBL" id="AF124349">
    <property type="protein sequence ID" value="AAD19714.1"/>
    <property type="molecule type" value="Genomic_DNA"/>
</dbReference>
<dbReference type="EMBL" id="AE008692">
    <property type="protein sequence ID" value="AAV89990.1"/>
    <property type="molecule type" value="Genomic_DNA"/>
</dbReference>
<dbReference type="RefSeq" id="WP_011241155.1">
    <property type="nucleotide sequence ID" value="NZ_CP035711.1"/>
</dbReference>
<dbReference type="SMR" id="Q9Z5U7"/>
<dbReference type="STRING" id="264203.ZMO1366"/>
<dbReference type="GeneID" id="79905264"/>
<dbReference type="KEGG" id="zmo:ZMO1366"/>
<dbReference type="eggNOG" id="COG0522">
    <property type="taxonomic scope" value="Bacteria"/>
</dbReference>
<dbReference type="HOGENOM" id="CLU_092403_0_0_5"/>
<dbReference type="Proteomes" id="UP000001173">
    <property type="component" value="Chromosome"/>
</dbReference>
<dbReference type="GO" id="GO:0015935">
    <property type="term" value="C:small ribosomal subunit"/>
    <property type="evidence" value="ECO:0007669"/>
    <property type="project" value="InterPro"/>
</dbReference>
<dbReference type="GO" id="GO:0019843">
    <property type="term" value="F:rRNA binding"/>
    <property type="evidence" value="ECO:0007669"/>
    <property type="project" value="UniProtKB-UniRule"/>
</dbReference>
<dbReference type="GO" id="GO:0003735">
    <property type="term" value="F:structural constituent of ribosome"/>
    <property type="evidence" value="ECO:0007669"/>
    <property type="project" value="InterPro"/>
</dbReference>
<dbReference type="GO" id="GO:0042274">
    <property type="term" value="P:ribosomal small subunit biogenesis"/>
    <property type="evidence" value="ECO:0007669"/>
    <property type="project" value="TreeGrafter"/>
</dbReference>
<dbReference type="GO" id="GO:0006412">
    <property type="term" value="P:translation"/>
    <property type="evidence" value="ECO:0007669"/>
    <property type="project" value="UniProtKB-UniRule"/>
</dbReference>
<dbReference type="CDD" id="cd00165">
    <property type="entry name" value="S4"/>
    <property type="match status" value="1"/>
</dbReference>
<dbReference type="FunFam" id="3.10.290.10:FF:000001">
    <property type="entry name" value="30S ribosomal protein S4"/>
    <property type="match status" value="1"/>
</dbReference>
<dbReference type="Gene3D" id="1.10.1050.10">
    <property type="entry name" value="Ribosomal Protein S4 Delta 41, Chain A, domain 1"/>
    <property type="match status" value="1"/>
</dbReference>
<dbReference type="Gene3D" id="3.10.290.10">
    <property type="entry name" value="RNA-binding S4 domain"/>
    <property type="match status" value="1"/>
</dbReference>
<dbReference type="HAMAP" id="MF_01306_B">
    <property type="entry name" value="Ribosomal_uS4_B"/>
    <property type="match status" value="1"/>
</dbReference>
<dbReference type="InterPro" id="IPR022801">
    <property type="entry name" value="Ribosomal_uS4"/>
</dbReference>
<dbReference type="InterPro" id="IPR005709">
    <property type="entry name" value="Ribosomal_uS4_bac-type"/>
</dbReference>
<dbReference type="InterPro" id="IPR018079">
    <property type="entry name" value="Ribosomal_uS4_CS"/>
</dbReference>
<dbReference type="InterPro" id="IPR001912">
    <property type="entry name" value="Ribosomal_uS4_N"/>
</dbReference>
<dbReference type="InterPro" id="IPR002942">
    <property type="entry name" value="S4_RNA-bd"/>
</dbReference>
<dbReference type="InterPro" id="IPR036986">
    <property type="entry name" value="S4_RNA-bd_sf"/>
</dbReference>
<dbReference type="NCBIfam" id="NF003717">
    <property type="entry name" value="PRK05327.1"/>
    <property type="match status" value="1"/>
</dbReference>
<dbReference type="NCBIfam" id="TIGR01017">
    <property type="entry name" value="rpsD_bact"/>
    <property type="match status" value="1"/>
</dbReference>
<dbReference type="PANTHER" id="PTHR11831">
    <property type="entry name" value="30S 40S RIBOSOMAL PROTEIN"/>
    <property type="match status" value="1"/>
</dbReference>
<dbReference type="PANTHER" id="PTHR11831:SF4">
    <property type="entry name" value="SMALL RIBOSOMAL SUBUNIT PROTEIN US4M"/>
    <property type="match status" value="1"/>
</dbReference>
<dbReference type="Pfam" id="PF00163">
    <property type="entry name" value="Ribosomal_S4"/>
    <property type="match status" value="1"/>
</dbReference>
<dbReference type="Pfam" id="PF01479">
    <property type="entry name" value="S4"/>
    <property type="match status" value="1"/>
</dbReference>
<dbReference type="SMART" id="SM01390">
    <property type="entry name" value="Ribosomal_S4"/>
    <property type="match status" value="1"/>
</dbReference>
<dbReference type="SMART" id="SM00363">
    <property type="entry name" value="S4"/>
    <property type="match status" value="1"/>
</dbReference>
<dbReference type="SUPFAM" id="SSF55174">
    <property type="entry name" value="Alpha-L RNA-binding motif"/>
    <property type="match status" value="1"/>
</dbReference>
<dbReference type="PROSITE" id="PS00632">
    <property type="entry name" value="RIBOSOMAL_S4"/>
    <property type="match status" value="1"/>
</dbReference>
<dbReference type="PROSITE" id="PS50889">
    <property type="entry name" value="S4"/>
    <property type="match status" value="1"/>
</dbReference>
<name>RS4_ZYMMO</name>
<protein>
    <recommendedName>
        <fullName evidence="1">Small ribosomal subunit protein uS4</fullName>
    </recommendedName>
    <alternativeName>
        <fullName evidence="3">30S ribosomal protein S4</fullName>
    </alternativeName>
</protein>
<keyword id="KW-1185">Reference proteome</keyword>
<keyword id="KW-0687">Ribonucleoprotein</keyword>
<keyword id="KW-0689">Ribosomal protein</keyword>
<keyword id="KW-0694">RNA-binding</keyword>
<keyword id="KW-0699">rRNA-binding</keyword>